<protein>
    <recommendedName>
        <fullName>Kelch domain-containing protein 8B</fullName>
    </recommendedName>
</protein>
<reference key="1">
    <citation type="journal article" date="2004" name="Genome Res.">
        <title>The status, quality, and expansion of the NIH full-length cDNA project: the Mammalian Gene Collection (MGC).</title>
        <authorList>
            <consortium name="The MGC Project Team"/>
        </authorList>
    </citation>
    <scope>NUCLEOTIDE SEQUENCE [LARGE SCALE MRNA]</scope>
    <source>
        <tissue>Heart</tissue>
    </source>
</reference>
<comment type="function">
    <text evidence="1">Involved in pinching off the separated nuclei at the cleavage furrow and in cytokinesis. Required for mitotic integrity and maintenance of chromosomal stability. Protects cells against mitotic errors, centrosomal amplification, micronucleus formation and aneuploidy. Plays a key role of midbody function involving abscission of the daughter cells during cytokinesis and appropriate chromosomal and nuclear segregation into the daughter cells.</text>
</comment>
<comment type="subcellular location">
    <subcellularLocation>
        <location evidence="1">Cytoplasm</location>
    </subcellularLocation>
    <subcellularLocation>
        <location evidence="1">Midbody</location>
    </subcellularLocation>
    <text evidence="1">In mitotic cells, concentrates in the midbody of the cytoplasmic bridge linking daughter cells as they are about to separate during cytokinesis.</text>
</comment>
<feature type="chain" id="PRO_0000119134" description="Kelch domain-containing protein 8B">
    <location>
        <begin position="1"/>
        <end position="354"/>
    </location>
</feature>
<feature type="repeat" description="Kelch 1">
    <location>
        <begin position="1"/>
        <end position="31"/>
    </location>
</feature>
<feature type="repeat" description="Kelch 2">
    <location>
        <begin position="32"/>
        <end position="79"/>
    </location>
</feature>
<feature type="repeat" description="Kelch 3">
    <location>
        <begin position="81"/>
        <end position="127"/>
    </location>
</feature>
<feature type="repeat" description="Kelch 4">
    <location>
        <begin position="128"/>
        <end position="175"/>
    </location>
</feature>
<feature type="repeat" description="Kelch 5">
    <location>
        <begin position="176"/>
        <end position="222"/>
    </location>
</feature>
<feature type="repeat" description="Kelch 6">
    <location>
        <begin position="224"/>
        <end position="281"/>
    </location>
</feature>
<feature type="repeat" description="Kelch 7">
    <location>
        <begin position="282"/>
        <end position="329"/>
    </location>
</feature>
<feature type="repeat" description="Kelch 8">
    <location>
        <begin position="331"/>
        <end position="354"/>
    </location>
</feature>
<dbReference type="EMBL" id="BC083777">
    <property type="protein sequence ID" value="AAH83777.1"/>
    <property type="molecule type" value="mRNA"/>
</dbReference>
<dbReference type="RefSeq" id="NP_001007686.1">
    <property type="nucleotide sequence ID" value="NM_001007685.1"/>
</dbReference>
<dbReference type="SMR" id="Q5XIA9"/>
<dbReference type="FunCoup" id="Q5XIA9">
    <property type="interactions" value="232"/>
</dbReference>
<dbReference type="STRING" id="10116.ENSRNOP00000066316"/>
<dbReference type="GlyGen" id="Q5XIA9">
    <property type="glycosylation" value="1 site"/>
</dbReference>
<dbReference type="PhosphoSitePlus" id="Q5XIA9"/>
<dbReference type="PaxDb" id="10116-ENSRNOP00000066316"/>
<dbReference type="GeneID" id="306589"/>
<dbReference type="KEGG" id="rno:306589"/>
<dbReference type="AGR" id="RGD:1359445"/>
<dbReference type="CTD" id="200942"/>
<dbReference type="RGD" id="1359445">
    <property type="gene designation" value="Klhdc8b"/>
</dbReference>
<dbReference type="VEuPathDB" id="HostDB:ENSRNOG00000047867"/>
<dbReference type="eggNOG" id="KOG1072">
    <property type="taxonomic scope" value="Eukaryota"/>
</dbReference>
<dbReference type="HOGENOM" id="CLU_046864_0_0_1"/>
<dbReference type="InParanoid" id="Q5XIA9"/>
<dbReference type="OrthoDB" id="45365at2759"/>
<dbReference type="PhylomeDB" id="Q5XIA9"/>
<dbReference type="PRO" id="PR:Q5XIA9"/>
<dbReference type="Proteomes" id="UP000002494">
    <property type="component" value="Chromosome 8"/>
</dbReference>
<dbReference type="Bgee" id="ENSRNOG00000047867">
    <property type="expression patterns" value="Expressed in heart and 18 other cell types or tissues"/>
</dbReference>
<dbReference type="GO" id="GO:0110070">
    <property type="term" value="C:cellularization cleavage furrow"/>
    <property type="evidence" value="ECO:0000250"/>
    <property type="project" value="UniProtKB"/>
</dbReference>
<dbReference type="GO" id="GO:0005737">
    <property type="term" value="C:cytoplasm"/>
    <property type="evidence" value="ECO:0000250"/>
    <property type="project" value="UniProtKB"/>
</dbReference>
<dbReference type="GO" id="GO:0005829">
    <property type="term" value="C:cytosol"/>
    <property type="evidence" value="ECO:0007669"/>
    <property type="project" value="Ensembl"/>
</dbReference>
<dbReference type="GO" id="GO:0045171">
    <property type="term" value="C:intercellular bridge"/>
    <property type="evidence" value="ECO:0000250"/>
    <property type="project" value="UniProtKB"/>
</dbReference>
<dbReference type="GO" id="GO:0030496">
    <property type="term" value="C:midbody"/>
    <property type="evidence" value="ECO:0000250"/>
    <property type="project" value="UniProtKB"/>
</dbReference>
<dbReference type="GO" id="GO:1902410">
    <property type="term" value="P:mitotic cytokinetic process"/>
    <property type="evidence" value="ECO:0000250"/>
    <property type="project" value="UniProtKB"/>
</dbReference>
<dbReference type="GO" id="GO:0140014">
    <property type="term" value="P:mitotic nuclear division"/>
    <property type="evidence" value="ECO:0000250"/>
    <property type="project" value="UniProtKB"/>
</dbReference>
<dbReference type="GO" id="GO:0098813">
    <property type="term" value="P:nuclear chromosome segregation"/>
    <property type="evidence" value="ECO:0000250"/>
    <property type="project" value="UniProtKB"/>
</dbReference>
<dbReference type="FunFam" id="2.120.10.80:FF:000197">
    <property type="entry name" value="Kelch domain-containing protein 8B"/>
    <property type="match status" value="1"/>
</dbReference>
<dbReference type="FunFam" id="2.120.10.80:FF:000250">
    <property type="entry name" value="Kelch domain-containing protein 8B"/>
    <property type="match status" value="1"/>
</dbReference>
<dbReference type="Gene3D" id="2.120.10.80">
    <property type="entry name" value="Kelch-type beta propeller"/>
    <property type="match status" value="2"/>
</dbReference>
<dbReference type="InterPro" id="IPR015915">
    <property type="entry name" value="Kelch-typ_b-propeller"/>
</dbReference>
<dbReference type="InterPro" id="IPR006652">
    <property type="entry name" value="Kelch_1"/>
</dbReference>
<dbReference type="InterPro" id="IPR051746">
    <property type="entry name" value="Kelch_domain_containing_8"/>
</dbReference>
<dbReference type="PANTHER" id="PTHR46260:SF2">
    <property type="entry name" value="KELCH DOMAIN-CONTAINING PROTEIN 8B"/>
    <property type="match status" value="1"/>
</dbReference>
<dbReference type="PANTHER" id="PTHR46260">
    <property type="entry name" value="RING-TYPE DOMAIN-CONTAINING PROTEIN"/>
    <property type="match status" value="1"/>
</dbReference>
<dbReference type="Pfam" id="PF01344">
    <property type="entry name" value="Kelch_1"/>
    <property type="match status" value="2"/>
</dbReference>
<dbReference type="Pfam" id="PF24681">
    <property type="entry name" value="Kelch_KLHDC2_KLHL20_DRC7"/>
    <property type="match status" value="1"/>
</dbReference>
<dbReference type="SMART" id="SM00612">
    <property type="entry name" value="Kelch"/>
    <property type="match status" value="6"/>
</dbReference>
<dbReference type="SUPFAM" id="SSF117281">
    <property type="entry name" value="Kelch motif"/>
    <property type="match status" value="2"/>
</dbReference>
<gene>
    <name type="primary">Klhdc8b</name>
</gene>
<proteinExistence type="evidence at transcript level"/>
<sequence length="354" mass="37593">MAAGGGQAFAWQVFPPMPTCRVYGTVAHQDGHLLVLGGCGRAGLPLDTAETLDMASHTWLALAPLPTARAGAAAVVLGKQVLVVGGVDEVQSPVAAVEAFLADEGRWERRATLPQAAMGVATVERDGMVYALGGMGPDTAPQAQVLVYESRRDRWLSLPSMPTPCYGASTFLHGNKIYVLGGRQGKLPVTAFEAFDLETRTWTRHPSLPSRRAFAGCAMAEGSVFSLGGLQQPGPHNFYSRPHFVNTVEMFDLEHGSWTKLPRSLRMRDKRADFVVGSLGGNIVAIGGLGNQPCPLASVESFSLARRRWEALPAMPTARCSCSSLQAGPRLFVIGGVAQGPSQAVEALCLRDGV</sequence>
<name>KLD8B_RAT</name>
<evidence type="ECO:0000250" key="1">
    <source>
        <dbReference type="UniProtKB" id="Q8IXV7"/>
    </source>
</evidence>
<accession>Q5XIA9</accession>
<keyword id="KW-0131">Cell cycle</keyword>
<keyword id="KW-0132">Cell division</keyword>
<keyword id="KW-0963">Cytoplasm</keyword>
<keyword id="KW-0880">Kelch repeat</keyword>
<keyword id="KW-1185">Reference proteome</keyword>
<keyword id="KW-0677">Repeat</keyword>
<organism>
    <name type="scientific">Rattus norvegicus</name>
    <name type="common">Rat</name>
    <dbReference type="NCBI Taxonomy" id="10116"/>
    <lineage>
        <taxon>Eukaryota</taxon>
        <taxon>Metazoa</taxon>
        <taxon>Chordata</taxon>
        <taxon>Craniata</taxon>
        <taxon>Vertebrata</taxon>
        <taxon>Euteleostomi</taxon>
        <taxon>Mammalia</taxon>
        <taxon>Eutheria</taxon>
        <taxon>Euarchontoglires</taxon>
        <taxon>Glires</taxon>
        <taxon>Rodentia</taxon>
        <taxon>Myomorpha</taxon>
        <taxon>Muroidea</taxon>
        <taxon>Muridae</taxon>
        <taxon>Murinae</taxon>
        <taxon>Rattus</taxon>
    </lineage>
</organism>